<reference key="1">
    <citation type="journal article" date="2004" name="Nat. Biotechnol.">
        <title>The genome sequence of the capnophilic rumen bacterium Mannheimia succiniciproducens.</title>
        <authorList>
            <person name="Hong S.H."/>
            <person name="Kim J.S."/>
            <person name="Lee S.Y."/>
            <person name="In Y.H."/>
            <person name="Choi S.S."/>
            <person name="Rih J.-K."/>
            <person name="Kim C.H."/>
            <person name="Jeong H."/>
            <person name="Hur C.G."/>
            <person name="Kim J.J."/>
        </authorList>
    </citation>
    <scope>NUCLEOTIDE SEQUENCE [LARGE SCALE GENOMIC DNA]</scope>
    <source>
        <strain>KCTC 0769BP / MBEL55E</strain>
    </source>
</reference>
<sequence>MRMPAGFLINAMKKQNLVILGSTGSIGKSTLSVIEHNPEKYHAFALVGGRNVDLMVEQCVKFQPEFAALDDENAAKQLAEKLKSAGKKTKVLAGQKAICELAAHPEADQVMAAIVGAAGLLPTLSAVQASKTVLLANKETLVTCGQIFIDEVKRTKARLLPVDSEHNAIFQSLPPEAQQQIGFCPLKELGINKIVLTGSGGPFRYTDLTEFDNITPEQAVAHPNWSMGKKISVDSATMMNKGLEYIEARWLFNAGAEEMEVIIHPQSIIHSMVRYIDGSVIAQMGNPDMRTPIAETMAYPGRIVSGVTPLDFYQLSGLTFLEPDYERYPCLKLAIEAFAAGQYATTAMNAANEIAVEAFLNRMIKFTDIARVNAKVVELIQPQQINCIDDVLAVDKQSRLVAKEVIVSLKA</sequence>
<gene>
    <name evidence="1" type="primary">dxr</name>
    <name type="ordered locus">MS1928</name>
</gene>
<name>DXR_MANSM</name>
<dbReference type="EC" id="1.1.1.267" evidence="1"/>
<dbReference type="EMBL" id="AE016827">
    <property type="protein sequence ID" value="AAU38535.1"/>
    <property type="molecule type" value="Genomic_DNA"/>
</dbReference>
<dbReference type="SMR" id="Q65R75"/>
<dbReference type="STRING" id="221988.MS1928"/>
<dbReference type="KEGG" id="msu:MS1928"/>
<dbReference type="eggNOG" id="COG0743">
    <property type="taxonomic scope" value="Bacteria"/>
</dbReference>
<dbReference type="HOGENOM" id="CLU_035714_4_0_6"/>
<dbReference type="UniPathway" id="UPA00056">
    <property type="reaction ID" value="UER00092"/>
</dbReference>
<dbReference type="Proteomes" id="UP000000607">
    <property type="component" value="Chromosome"/>
</dbReference>
<dbReference type="GO" id="GO:0030604">
    <property type="term" value="F:1-deoxy-D-xylulose-5-phosphate reductoisomerase activity"/>
    <property type="evidence" value="ECO:0007669"/>
    <property type="project" value="UniProtKB-UniRule"/>
</dbReference>
<dbReference type="GO" id="GO:0030145">
    <property type="term" value="F:manganese ion binding"/>
    <property type="evidence" value="ECO:0007669"/>
    <property type="project" value="TreeGrafter"/>
</dbReference>
<dbReference type="GO" id="GO:0070402">
    <property type="term" value="F:NADPH binding"/>
    <property type="evidence" value="ECO:0007669"/>
    <property type="project" value="InterPro"/>
</dbReference>
<dbReference type="GO" id="GO:0051484">
    <property type="term" value="P:isopentenyl diphosphate biosynthetic process, methylerythritol 4-phosphate pathway involved in terpenoid biosynthetic process"/>
    <property type="evidence" value="ECO:0007669"/>
    <property type="project" value="TreeGrafter"/>
</dbReference>
<dbReference type="FunFam" id="1.10.1740.10:FF:000004">
    <property type="entry name" value="1-deoxy-D-xylulose 5-phosphate reductoisomerase"/>
    <property type="match status" value="1"/>
</dbReference>
<dbReference type="FunFam" id="3.40.50.720:FF:000045">
    <property type="entry name" value="1-deoxy-D-xylulose 5-phosphate reductoisomerase"/>
    <property type="match status" value="1"/>
</dbReference>
<dbReference type="Gene3D" id="1.10.1740.10">
    <property type="match status" value="1"/>
</dbReference>
<dbReference type="Gene3D" id="3.40.50.720">
    <property type="entry name" value="NAD(P)-binding Rossmann-like Domain"/>
    <property type="match status" value="1"/>
</dbReference>
<dbReference type="HAMAP" id="MF_00183">
    <property type="entry name" value="DXP_reductoisom"/>
    <property type="match status" value="1"/>
</dbReference>
<dbReference type="InterPro" id="IPR003821">
    <property type="entry name" value="DXP_reductoisomerase"/>
</dbReference>
<dbReference type="InterPro" id="IPR013644">
    <property type="entry name" value="DXP_reductoisomerase_C"/>
</dbReference>
<dbReference type="InterPro" id="IPR013512">
    <property type="entry name" value="DXP_reductoisomerase_N"/>
</dbReference>
<dbReference type="InterPro" id="IPR026877">
    <property type="entry name" value="DXPR_C"/>
</dbReference>
<dbReference type="InterPro" id="IPR036169">
    <property type="entry name" value="DXPR_C_sf"/>
</dbReference>
<dbReference type="InterPro" id="IPR036291">
    <property type="entry name" value="NAD(P)-bd_dom_sf"/>
</dbReference>
<dbReference type="NCBIfam" id="TIGR00243">
    <property type="entry name" value="Dxr"/>
    <property type="match status" value="1"/>
</dbReference>
<dbReference type="NCBIfam" id="NF003938">
    <property type="entry name" value="PRK05447.1-1"/>
    <property type="match status" value="1"/>
</dbReference>
<dbReference type="NCBIfam" id="NF009114">
    <property type="entry name" value="PRK12464.1"/>
    <property type="match status" value="1"/>
</dbReference>
<dbReference type="PANTHER" id="PTHR30525">
    <property type="entry name" value="1-DEOXY-D-XYLULOSE 5-PHOSPHATE REDUCTOISOMERASE"/>
    <property type="match status" value="1"/>
</dbReference>
<dbReference type="PANTHER" id="PTHR30525:SF0">
    <property type="entry name" value="1-DEOXY-D-XYLULOSE 5-PHOSPHATE REDUCTOISOMERASE, CHLOROPLASTIC"/>
    <property type="match status" value="1"/>
</dbReference>
<dbReference type="Pfam" id="PF08436">
    <property type="entry name" value="DXP_redisom_C"/>
    <property type="match status" value="1"/>
</dbReference>
<dbReference type="Pfam" id="PF02670">
    <property type="entry name" value="DXP_reductoisom"/>
    <property type="match status" value="1"/>
</dbReference>
<dbReference type="Pfam" id="PF13288">
    <property type="entry name" value="DXPR_C"/>
    <property type="match status" value="1"/>
</dbReference>
<dbReference type="PIRSF" id="PIRSF006205">
    <property type="entry name" value="Dxp_reductismrs"/>
    <property type="match status" value="1"/>
</dbReference>
<dbReference type="SUPFAM" id="SSF69055">
    <property type="entry name" value="1-deoxy-D-xylulose-5-phosphate reductoisomerase, C-terminal domain"/>
    <property type="match status" value="1"/>
</dbReference>
<dbReference type="SUPFAM" id="SSF55347">
    <property type="entry name" value="Glyceraldehyde-3-phosphate dehydrogenase-like, C-terminal domain"/>
    <property type="match status" value="1"/>
</dbReference>
<dbReference type="SUPFAM" id="SSF51735">
    <property type="entry name" value="NAD(P)-binding Rossmann-fold domains"/>
    <property type="match status" value="1"/>
</dbReference>
<protein>
    <recommendedName>
        <fullName evidence="1">1-deoxy-D-xylulose 5-phosphate reductoisomerase</fullName>
        <shortName evidence="1">DXP reductoisomerase</shortName>
        <ecNumber evidence="1">1.1.1.267</ecNumber>
    </recommendedName>
    <alternativeName>
        <fullName evidence="1">1-deoxyxylulose-5-phosphate reductoisomerase</fullName>
    </alternativeName>
    <alternativeName>
        <fullName evidence="1">2-C-methyl-D-erythritol 4-phosphate synthase</fullName>
    </alternativeName>
</protein>
<organism>
    <name type="scientific">Mannheimia succiniciproducens (strain KCTC 0769BP / MBEL55E)</name>
    <dbReference type="NCBI Taxonomy" id="221988"/>
    <lineage>
        <taxon>Bacteria</taxon>
        <taxon>Pseudomonadati</taxon>
        <taxon>Pseudomonadota</taxon>
        <taxon>Gammaproteobacteria</taxon>
        <taxon>Pasteurellales</taxon>
        <taxon>Pasteurellaceae</taxon>
        <taxon>Basfia</taxon>
    </lineage>
</organism>
<comment type="function">
    <text evidence="1">Catalyzes the NADPH-dependent rearrangement and reduction of 1-deoxy-D-xylulose-5-phosphate (DXP) to 2-C-methyl-D-erythritol 4-phosphate (MEP).</text>
</comment>
<comment type="catalytic activity">
    <reaction evidence="1">
        <text>2-C-methyl-D-erythritol 4-phosphate + NADP(+) = 1-deoxy-D-xylulose 5-phosphate + NADPH + H(+)</text>
        <dbReference type="Rhea" id="RHEA:13717"/>
        <dbReference type="ChEBI" id="CHEBI:15378"/>
        <dbReference type="ChEBI" id="CHEBI:57783"/>
        <dbReference type="ChEBI" id="CHEBI:57792"/>
        <dbReference type="ChEBI" id="CHEBI:58262"/>
        <dbReference type="ChEBI" id="CHEBI:58349"/>
        <dbReference type="EC" id="1.1.1.267"/>
    </reaction>
    <physiologicalReaction direction="right-to-left" evidence="1">
        <dbReference type="Rhea" id="RHEA:13719"/>
    </physiologicalReaction>
</comment>
<comment type="cofactor">
    <cofactor evidence="1">
        <name>Mg(2+)</name>
        <dbReference type="ChEBI" id="CHEBI:18420"/>
    </cofactor>
    <cofactor evidence="1">
        <name>Mn(2+)</name>
        <dbReference type="ChEBI" id="CHEBI:29035"/>
    </cofactor>
</comment>
<comment type="pathway">
    <text evidence="1">Isoprenoid biosynthesis; isopentenyl diphosphate biosynthesis via DXP pathway; isopentenyl diphosphate from 1-deoxy-D-xylulose 5-phosphate: step 1/6.</text>
</comment>
<comment type="similarity">
    <text evidence="1">Belongs to the DXR family.</text>
</comment>
<evidence type="ECO:0000255" key="1">
    <source>
        <dbReference type="HAMAP-Rule" id="MF_00183"/>
    </source>
</evidence>
<proteinExistence type="inferred from homology"/>
<feature type="chain" id="PRO_0000163673" description="1-deoxy-D-xylulose 5-phosphate reductoisomerase">
    <location>
        <begin position="1"/>
        <end position="411"/>
    </location>
</feature>
<feature type="binding site" evidence="1">
    <location>
        <position position="23"/>
    </location>
    <ligand>
        <name>NADPH</name>
        <dbReference type="ChEBI" id="CHEBI:57783"/>
    </ligand>
</feature>
<feature type="binding site" evidence="1">
    <location>
        <position position="24"/>
    </location>
    <ligand>
        <name>NADPH</name>
        <dbReference type="ChEBI" id="CHEBI:57783"/>
    </ligand>
</feature>
<feature type="binding site" evidence="1">
    <location>
        <position position="25"/>
    </location>
    <ligand>
        <name>NADPH</name>
        <dbReference type="ChEBI" id="CHEBI:57783"/>
    </ligand>
</feature>
<feature type="binding site" evidence="1">
    <location>
        <position position="26"/>
    </location>
    <ligand>
        <name>NADPH</name>
        <dbReference type="ChEBI" id="CHEBI:57783"/>
    </ligand>
</feature>
<feature type="binding site" evidence="1">
    <location>
        <position position="49"/>
    </location>
    <ligand>
        <name>NADPH</name>
        <dbReference type="ChEBI" id="CHEBI:57783"/>
    </ligand>
</feature>
<feature type="binding site" evidence="1">
    <location>
        <position position="50"/>
    </location>
    <ligand>
        <name>NADPH</name>
        <dbReference type="ChEBI" id="CHEBI:57783"/>
    </ligand>
</feature>
<feature type="binding site" evidence="1">
    <location>
        <position position="51"/>
    </location>
    <ligand>
        <name>NADPH</name>
        <dbReference type="ChEBI" id="CHEBI:57783"/>
    </ligand>
</feature>
<feature type="binding site" evidence="1">
    <location>
        <position position="137"/>
    </location>
    <ligand>
        <name>NADPH</name>
        <dbReference type="ChEBI" id="CHEBI:57783"/>
    </ligand>
</feature>
<feature type="binding site" evidence="1">
    <location>
        <position position="138"/>
    </location>
    <ligand>
        <name>1-deoxy-D-xylulose 5-phosphate</name>
        <dbReference type="ChEBI" id="CHEBI:57792"/>
    </ligand>
</feature>
<feature type="binding site" evidence="1">
    <location>
        <position position="139"/>
    </location>
    <ligand>
        <name>NADPH</name>
        <dbReference type="ChEBI" id="CHEBI:57783"/>
    </ligand>
</feature>
<feature type="binding site" evidence="1">
    <location>
        <position position="163"/>
    </location>
    <ligand>
        <name>Mn(2+)</name>
        <dbReference type="ChEBI" id="CHEBI:29035"/>
    </ligand>
</feature>
<feature type="binding site" evidence="1">
    <location>
        <position position="164"/>
    </location>
    <ligand>
        <name>1-deoxy-D-xylulose 5-phosphate</name>
        <dbReference type="ChEBI" id="CHEBI:57792"/>
    </ligand>
</feature>
<feature type="binding site" evidence="1">
    <location>
        <position position="165"/>
    </location>
    <ligand>
        <name>1-deoxy-D-xylulose 5-phosphate</name>
        <dbReference type="ChEBI" id="CHEBI:57792"/>
    </ligand>
</feature>
<feature type="binding site" evidence="1">
    <location>
        <position position="165"/>
    </location>
    <ligand>
        <name>Mn(2+)</name>
        <dbReference type="ChEBI" id="CHEBI:29035"/>
    </ligand>
</feature>
<feature type="binding site" evidence="1">
    <location>
        <position position="199"/>
    </location>
    <ligand>
        <name>1-deoxy-D-xylulose 5-phosphate</name>
        <dbReference type="ChEBI" id="CHEBI:57792"/>
    </ligand>
</feature>
<feature type="binding site" evidence="1">
    <location>
        <position position="222"/>
    </location>
    <ligand>
        <name>1-deoxy-D-xylulose 5-phosphate</name>
        <dbReference type="ChEBI" id="CHEBI:57792"/>
    </ligand>
</feature>
<feature type="binding site" evidence="1">
    <location>
        <position position="228"/>
    </location>
    <ligand>
        <name>NADPH</name>
        <dbReference type="ChEBI" id="CHEBI:57783"/>
    </ligand>
</feature>
<feature type="binding site" evidence="1">
    <location>
        <position position="235"/>
    </location>
    <ligand>
        <name>1-deoxy-D-xylulose 5-phosphate</name>
        <dbReference type="ChEBI" id="CHEBI:57792"/>
    </ligand>
</feature>
<feature type="binding site" evidence="1">
    <location>
        <position position="240"/>
    </location>
    <ligand>
        <name>1-deoxy-D-xylulose 5-phosphate</name>
        <dbReference type="ChEBI" id="CHEBI:57792"/>
    </ligand>
</feature>
<feature type="binding site" evidence="1">
    <location>
        <position position="241"/>
    </location>
    <ligand>
        <name>1-deoxy-D-xylulose 5-phosphate</name>
        <dbReference type="ChEBI" id="CHEBI:57792"/>
    </ligand>
</feature>
<feature type="binding site" evidence="1">
    <location>
        <position position="244"/>
    </location>
    <ligand>
        <name>1-deoxy-D-xylulose 5-phosphate</name>
        <dbReference type="ChEBI" id="CHEBI:57792"/>
    </ligand>
</feature>
<feature type="binding site" evidence="1">
    <location>
        <position position="244"/>
    </location>
    <ligand>
        <name>Mn(2+)</name>
        <dbReference type="ChEBI" id="CHEBI:29035"/>
    </ligand>
</feature>
<accession>Q65R75</accession>
<keyword id="KW-0414">Isoprene biosynthesis</keyword>
<keyword id="KW-0464">Manganese</keyword>
<keyword id="KW-0479">Metal-binding</keyword>
<keyword id="KW-0521">NADP</keyword>
<keyword id="KW-0560">Oxidoreductase</keyword>